<accession>Q3ZC91</accession>
<gene>
    <name type="primary">SMPDL3A</name>
</gene>
<reference key="1">
    <citation type="submission" date="2005-08" db="EMBL/GenBank/DDBJ databases">
        <authorList>
            <consortium name="NIH - Mammalian Gene Collection (MGC) project"/>
        </authorList>
    </citation>
    <scope>NUCLEOTIDE SEQUENCE [LARGE SCALE MRNA]</scope>
    <source>
        <strain>Crossbred X Angus</strain>
        <tissue>Ileum</tissue>
    </source>
</reference>
<proteinExistence type="evidence at transcript level"/>
<feature type="signal peptide" evidence="2">
    <location>
        <begin position="1"/>
        <end position="22"/>
    </location>
</feature>
<feature type="chain" id="PRO_0000288776" description="Cyclic GMP-AMP phosphodiesterase SMPDL3A">
    <location>
        <begin position="23"/>
        <end position="450"/>
    </location>
</feature>
<feature type="binding site" evidence="1">
    <location>
        <position position="42"/>
    </location>
    <ligand>
        <name>Zn(2+)</name>
        <dbReference type="ChEBI" id="CHEBI:29105"/>
        <label>1</label>
    </ligand>
</feature>
<feature type="binding site" evidence="1">
    <location>
        <position position="44"/>
    </location>
    <ligand>
        <name>Zn(2+)</name>
        <dbReference type="ChEBI" id="CHEBI:29105"/>
        <label>1</label>
    </ligand>
</feature>
<feature type="binding site" evidence="1">
    <location>
        <position position="107"/>
    </location>
    <ligand>
        <name>Zn(2+)</name>
        <dbReference type="ChEBI" id="CHEBI:29105"/>
        <label>1</label>
    </ligand>
</feature>
<feature type="binding site" evidence="1">
    <location>
        <position position="107"/>
    </location>
    <ligand>
        <name>Zn(2+)</name>
        <dbReference type="ChEBI" id="CHEBI:29105"/>
        <label>2</label>
    </ligand>
</feature>
<feature type="binding site" evidence="1">
    <location>
        <position position="111"/>
    </location>
    <ligand>
        <name>ATP</name>
        <dbReference type="ChEBI" id="CHEBI:30616"/>
    </ligand>
</feature>
<feature type="binding site" evidence="1">
    <location>
        <position position="148"/>
    </location>
    <ligand>
        <name>ATP</name>
        <dbReference type="ChEBI" id="CHEBI:30616"/>
    </ligand>
</feature>
<feature type="binding site" evidence="1">
    <location>
        <position position="148"/>
    </location>
    <ligand>
        <name>Zn(2+)</name>
        <dbReference type="ChEBI" id="CHEBI:29105"/>
        <label>2</label>
    </ligand>
</feature>
<feature type="binding site" evidence="1">
    <location>
        <position position="149"/>
    </location>
    <ligand>
        <name>ATP</name>
        <dbReference type="ChEBI" id="CHEBI:30616"/>
    </ligand>
</feature>
<feature type="binding site" evidence="1">
    <location>
        <position position="249"/>
    </location>
    <ligand>
        <name>Zn(2+)</name>
        <dbReference type="ChEBI" id="CHEBI:29105"/>
        <label>2</label>
    </ligand>
</feature>
<feature type="binding site" evidence="1">
    <location>
        <position position="290"/>
    </location>
    <ligand>
        <name>Zn(2+)</name>
        <dbReference type="ChEBI" id="CHEBI:29105"/>
        <label>2</label>
    </ligand>
</feature>
<feature type="binding site" evidence="1">
    <location>
        <position position="292"/>
    </location>
    <ligand>
        <name>Zn(2+)</name>
        <dbReference type="ChEBI" id="CHEBI:29105"/>
        <label>1</label>
    </ligand>
</feature>
<feature type="glycosylation site" description="N-linked (GlcNAc...) asparagine" evidence="2">
    <location>
        <position position="124"/>
    </location>
</feature>
<feature type="glycosylation site" description="N-linked (GlcNAc...) asparagine" evidence="2">
    <location>
        <position position="128"/>
    </location>
</feature>
<feature type="glycosylation site" description="N-linked (GlcNAc...) asparagine" evidence="2">
    <location>
        <position position="219"/>
    </location>
</feature>
<feature type="glycosylation site" description="N-linked (GlcNAc...) asparagine" evidence="2">
    <location>
        <position position="235"/>
    </location>
</feature>
<feature type="glycosylation site" description="N-linked (GlcNAc...) asparagine" evidence="2">
    <location>
        <position position="353"/>
    </location>
</feature>
<feature type="glycosylation site" description="N-linked (GlcNAc...) asparagine" evidence="2">
    <location>
        <position position="370"/>
    </location>
</feature>
<feature type="disulfide bond" evidence="1">
    <location>
        <begin position="59"/>
        <end position="78"/>
    </location>
</feature>
<feature type="disulfide bond" evidence="2">
    <location>
        <begin position="417"/>
        <end position="421"/>
    </location>
</feature>
<feature type="disulfide bond" evidence="1">
    <location>
        <begin position="427"/>
        <end position="440"/>
    </location>
</feature>
<keyword id="KW-1015">Disulfide bond</keyword>
<keyword id="KW-0325">Glycoprotein</keyword>
<keyword id="KW-0378">Hydrolase</keyword>
<keyword id="KW-0479">Metal-binding</keyword>
<keyword id="KW-1185">Reference proteome</keyword>
<keyword id="KW-0964">Secreted</keyword>
<keyword id="KW-0732">Signal</keyword>
<keyword id="KW-0862">Zinc</keyword>
<evidence type="ECO:0000250" key="1">
    <source>
        <dbReference type="UniProtKB" id="Q92484"/>
    </source>
</evidence>
<evidence type="ECO:0000255" key="2"/>
<evidence type="ECO:0000305" key="3"/>
<comment type="function">
    <text evidence="1">Cyclic-nucleotide phosphodiesterase that acts as a negative regulator of innate immunity by mediating degradation of 2',3'-cGAMP, thereby inhibiting the cGAS-STING signaling. Specifically linearizes 2',3'-cGAMP into 2'5'-bond pGpA and further hydrolyzes pGpA to produce GpA. Also has in vitro nucleotide phosphodiesterase activity with nucleoside triphosphates, such as ATP. Has in vitro activity with p-nitrophenyl-TMP. Has lower activity with nucleoside diphosphates, and no activity with nucleoside monophosphates. Has in vitro activity with CDP-choline, giving rise to CMP and phosphocholine. Has in vitro activity with CDP-ethanolamine. Does not have sphingomyelin phosphodiesterase activity.</text>
</comment>
<comment type="catalytic activity">
    <reaction evidence="1">
        <text>2',3'-cGAMP + H2O = 5'-pGpA(2'-5') + H(+)</text>
        <dbReference type="Rhea" id="RHEA:78339"/>
        <dbReference type="ChEBI" id="CHEBI:15377"/>
        <dbReference type="ChEBI" id="CHEBI:15378"/>
        <dbReference type="ChEBI" id="CHEBI:143093"/>
        <dbReference type="ChEBI" id="CHEBI:228270"/>
    </reaction>
    <physiologicalReaction direction="left-to-right" evidence="1">
        <dbReference type="Rhea" id="RHEA:78340"/>
    </physiologicalReaction>
</comment>
<comment type="catalytic activity">
    <reaction evidence="1">
        <text>5'-pGpA(2'-5') + H2O = 5'-GpA(2'-5') + phosphate</text>
        <dbReference type="Rhea" id="RHEA:78343"/>
        <dbReference type="ChEBI" id="CHEBI:15377"/>
        <dbReference type="ChEBI" id="CHEBI:43474"/>
        <dbReference type="ChEBI" id="CHEBI:228270"/>
        <dbReference type="ChEBI" id="CHEBI:228271"/>
    </reaction>
    <physiologicalReaction direction="left-to-right" evidence="1">
        <dbReference type="Rhea" id="RHEA:78344"/>
    </physiologicalReaction>
</comment>
<comment type="catalytic activity">
    <reaction evidence="1">
        <text>a ribonucleoside 5'-triphosphate + H2O = a ribonucleoside 5'-diphosphate + phosphate + H(+)</text>
        <dbReference type="Rhea" id="RHEA:23680"/>
        <dbReference type="ChEBI" id="CHEBI:15377"/>
        <dbReference type="ChEBI" id="CHEBI:15378"/>
        <dbReference type="ChEBI" id="CHEBI:43474"/>
        <dbReference type="ChEBI" id="CHEBI:57930"/>
        <dbReference type="ChEBI" id="CHEBI:61557"/>
        <dbReference type="EC" id="3.6.1.15"/>
    </reaction>
    <physiologicalReaction direction="left-to-right" evidence="1">
        <dbReference type="Rhea" id="RHEA:23681"/>
    </physiologicalReaction>
</comment>
<comment type="catalytic activity">
    <reaction evidence="1">
        <text>ATP + H2O = ADP + phosphate + H(+)</text>
        <dbReference type="Rhea" id="RHEA:13065"/>
        <dbReference type="ChEBI" id="CHEBI:15377"/>
        <dbReference type="ChEBI" id="CHEBI:15378"/>
        <dbReference type="ChEBI" id="CHEBI:30616"/>
        <dbReference type="ChEBI" id="CHEBI:43474"/>
        <dbReference type="ChEBI" id="CHEBI:456216"/>
    </reaction>
    <physiologicalReaction direction="left-to-right" evidence="1">
        <dbReference type="Rhea" id="RHEA:13066"/>
    </physiologicalReaction>
</comment>
<comment type="cofactor">
    <cofactor evidence="1">
        <name>Zn(2+)</name>
        <dbReference type="ChEBI" id="CHEBI:29105"/>
    </cofactor>
    <text evidence="1">Binds 2 Zn(2+) per subunit.</text>
</comment>
<comment type="subunit">
    <text evidence="1">Monomer. Homodimer; homodimerizes following 2',3'-cGAMP-binding.</text>
</comment>
<comment type="subcellular location">
    <subcellularLocation>
        <location evidence="1">Secreted</location>
    </subcellularLocation>
</comment>
<comment type="similarity">
    <text evidence="3">Belongs to the acid sphingomyelinase family.</text>
</comment>
<protein>
    <recommendedName>
        <fullName evidence="3">Cyclic GMP-AMP phosphodiesterase SMPDL3A</fullName>
        <shortName evidence="3">2',3'-cGAMP phosphodiesterase SMPDL3A</shortName>
        <ecNumber evidence="1">3.1.4.-</ecNumber>
    </recommendedName>
    <alternativeName>
        <fullName>Acid sphingomyelinase-like phosphodiesterase 3a</fullName>
        <shortName>ASM-like phosphodiesterase 3a</shortName>
        <ecNumber evidence="1">3.6.1.15</ecNumber>
    </alternativeName>
</protein>
<sequence>MARLGALVCCLLAAWHCRPGLGLPLAPAGTGPAVGQFWHVTDFHLDPTYHITGDHTKVCASSKGAEASDPGPFGDVMCDSPYRLIFSALDFIKNSGQKVSFMIWTGDSPPHVPVLELSTDKVINVTANITTTIQRLFPNLQVFPALGNHDYWPQDQLPVVNSKVYNAVANLWKPWLTEDAITTLRKGGFYTQKVSNNPKLRIISLNTNLYYGPNSVTLNQTDPANQFEWLENTLNISQQNKEKVYIIAHVPVGYLPYARGISAMRKYHNEKLIDIFRKYSDIIAGQFYGHTHRDSIMVLSDKKGKPVNSLFVAPAVTPVRSVLERLTNNPGVRLFQYDPRDYKLLDMLQYYLNLTDANLKGESNWKLEYNLTQAYDIQDLQPKSLYKLAKQFAIQESKQFIKYYKYFFVSYDSSVICQGKCKIFQICAIMNLDVISYTDCFRQYHMKHRL</sequence>
<organism>
    <name type="scientific">Bos taurus</name>
    <name type="common">Bovine</name>
    <dbReference type="NCBI Taxonomy" id="9913"/>
    <lineage>
        <taxon>Eukaryota</taxon>
        <taxon>Metazoa</taxon>
        <taxon>Chordata</taxon>
        <taxon>Craniata</taxon>
        <taxon>Vertebrata</taxon>
        <taxon>Euteleostomi</taxon>
        <taxon>Mammalia</taxon>
        <taxon>Eutheria</taxon>
        <taxon>Laurasiatheria</taxon>
        <taxon>Artiodactyla</taxon>
        <taxon>Ruminantia</taxon>
        <taxon>Pecora</taxon>
        <taxon>Bovidae</taxon>
        <taxon>Bovinae</taxon>
        <taxon>Bos</taxon>
    </lineage>
</organism>
<dbReference type="EC" id="3.1.4.-" evidence="1"/>
<dbReference type="EC" id="3.6.1.15" evidence="1"/>
<dbReference type="EMBL" id="BC102796">
    <property type="protein sequence ID" value="AAI02797.1"/>
    <property type="molecule type" value="mRNA"/>
</dbReference>
<dbReference type="RefSeq" id="NP_001030191.1">
    <property type="nucleotide sequence ID" value="NM_001035019.2"/>
</dbReference>
<dbReference type="SMR" id="Q3ZC91"/>
<dbReference type="FunCoup" id="Q3ZC91">
    <property type="interactions" value="107"/>
</dbReference>
<dbReference type="STRING" id="9913.ENSBTAP00000028765"/>
<dbReference type="GlyCosmos" id="Q3ZC91">
    <property type="glycosylation" value="6 sites, No reported glycans"/>
</dbReference>
<dbReference type="GlyGen" id="Q3ZC91">
    <property type="glycosylation" value="6 sites"/>
</dbReference>
<dbReference type="PaxDb" id="9913-ENSBTAP00000028765"/>
<dbReference type="GeneID" id="505300"/>
<dbReference type="KEGG" id="bta:505300"/>
<dbReference type="CTD" id="10924"/>
<dbReference type="eggNOG" id="KOG3770">
    <property type="taxonomic scope" value="Eukaryota"/>
</dbReference>
<dbReference type="InParanoid" id="Q3ZC91"/>
<dbReference type="OrthoDB" id="348678at2759"/>
<dbReference type="Proteomes" id="UP000009136">
    <property type="component" value="Unplaced"/>
</dbReference>
<dbReference type="GO" id="GO:0005576">
    <property type="term" value="C:extracellular region"/>
    <property type="evidence" value="ECO:0000250"/>
    <property type="project" value="UniProtKB"/>
</dbReference>
<dbReference type="GO" id="GO:0005615">
    <property type="term" value="C:extracellular space"/>
    <property type="evidence" value="ECO:0000250"/>
    <property type="project" value="UniProtKB"/>
</dbReference>
<dbReference type="GO" id="GO:0016887">
    <property type="term" value="F:ATP hydrolysis activity"/>
    <property type="evidence" value="ECO:0007669"/>
    <property type="project" value="RHEA"/>
</dbReference>
<dbReference type="GO" id="GO:0008081">
    <property type="term" value="F:phosphoric diester hydrolase activity"/>
    <property type="evidence" value="ECO:0000250"/>
    <property type="project" value="UniProtKB"/>
</dbReference>
<dbReference type="GO" id="GO:0008270">
    <property type="term" value="F:zinc ion binding"/>
    <property type="evidence" value="ECO:0000250"/>
    <property type="project" value="UniProtKB"/>
</dbReference>
<dbReference type="GO" id="GO:0160049">
    <property type="term" value="P:negative regulation of cGAS/STING signaling pathway"/>
    <property type="evidence" value="ECO:0000250"/>
    <property type="project" value="UniProtKB"/>
</dbReference>
<dbReference type="GO" id="GO:0009143">
    <property type="term" value="P:nucleoside triphosphate catabolic process"/>
    <property type="evidence" value="ECO:0000250"/>
    <property type="project" value="UniProtKB"/>
</dbReference>
<dbReference type="CDD" id="cd00842">
    <property type="entry name" value="MPP_ASMase"/>
    <property type="match status" value="1"/>
</dbReference>
<dbReference type="FunFam" id="3.60.21.10:FF:000044">
    <property type="entry name" value="acid sphingomyelinase-like phosphodiesterase 3a"/>
    <property type="match status" value="1"/>
</dbReference>
<dbReference type="Gene3D" id="3.60.21.10">
    <property type="match status" value="1"/>
</dbReference>
<dbReference type="InterPro" id="IPR017064">
    <property type="entry name" value="ASM-like_Pdiesterase_prd"/>
</dbReference>
<dbReference type="InterPro" id="IPR045473">
    <property type="entry name" value="ASM_C"/>
</dbReference>
<dbReference type="InterPro" id="IPR041805">
    <property type="entry name" value="ASMase/PPN1_MPP"/>
</dbReference>
<dbReference type="InterPro" id="IPR004843">
    <property type="entry name" value="Calcineurin-like_PHP_ApaH"/>
</dbReference>
<dbReference type="InterPro" id="IPR029052">
    <property type="entry name" value="Metallo-depent_PP-like"/>
</dbReference>
<dbReference type="PANTHER" id="PTHR10340:SF24">
    <property type="entry name" value="ACID SPHINGOMYELINASE-LIKE PHOSPHODIESTERASE 3A"/>
    <property type="match status" value="1"/>
</dbReference>
<dbReference type="PANTHER" id="PTHR10340">
    <property type="entry name" value="SPHINGOMYELIN PHOSPHODIESTERASE"/>
    <property type="match status" value="1"/>
</dbReference>
<dbReference type="Pfam" id="PF19272">
    <property type="entry name" value="ASMase_C"/>
    <property type="match status" value="1"/>
</dbReference>
<dbReference type="Pfam" id="PF00149">
    <property type="entry name" value="Metallophos"/>
    <property type="match status" value="1"/>
</dbReference>
<dbReference type="PIRSF" id="PIRSF036767">
    <property type="entry name" value="ASM-like_PDE"/>
    <property type="match status" value="1"/>
</dbReference>
<dbReference type="SUPFAM" id="SSF56300">
    <property type="entry name" value="Metallo-dependent phosphatases"/>
    <property type="match status" value="1"/>
</dbReference>
<name>ASM3A_BOVIN</name>